<evidence type="ECO:0000255" key="1">
    <source>
        <dbReference type="HAMAP-Rule" id="MF_01077"/>
    </source>
</evidence>
<reference key="1">
    <citation type="submission" date="2008-05" db="EMBL/GenBank/DDBJ databases">
        <title>Complete sequence of Shigella boydii serotype 18 strain BS512.</title>
        <authorList>
            <person name="Rasko D.A."/>
            <person name="Rosovitz M."/>
            <person name="Maurelli A.T."/>
            <person name="Myers G."/>
            <person name="Seshadri R."/>
            <person name="Cer R."/>
            <person name="Jiang L."/>
            <person name="Ravel J."/>
            <person name="Sebastian Y."/>
        </authorList>
    </citation>
    <scope>NUCLEOTIDE SEQUENCE [LARGE SCALE GENOMIC DNA]</scope>
    <source>
        <strain>CDC 3083-94 / BS512</strain>
    </source>
</reference>
<feature type="chain" id="PRO_0000384773" description="Ribosome maturation factor RimP">
    <location>
        <begin position="1"/>
        <end position="150"/>
    </location>
</feature>
<proteinExistence type="inferred from homology"/>
<keyword id="KW-0963">Cytoplasm</keyword>
<keyword id="KW-1185">Reference proteome</keyword>
<keyword id="KW-0690">Ribosome biogenesis</keyword>
<dbReference type="EMBL" id="CP001063">
    <property type="protein sequence ID" value="ACD09458.1"/>
    <property type="molecule type" value="Genomic_DNA"/>
</dbReference>
<dbReference type="RefSeq" id="WP_001300397.1">
    <property type="nucleotide sequence ID" value="NC_010658.1"/>
</dbReference>
<dbReference type="SMR" id="B2U205"/>
<dbReference type="STRING" id="344609.SbBS512_E3601"/>
<dbReference type="GeneID" id="93778813"/>
<dbReference type="KEGG" id="sbc:SbBS512_E3601"/>
<dbReference type="HOGENOM" id="CLU_070525_1_1_6"/>
<dbReference type="Proteomes" id="UP000001030">
    <property type="component" value="Chromosome"/>
</dbReference>
<dbReference type="GO" id="GO:0005829">
    <property type="term" value="C:cytosol"/>
    <property type="evidence" value="ECO:0007669"/>
    <property type="project" value="TreeGrafter"/>
</dbReference>
<dbReference type="GO" id="GO:0000028">
    <property type="term" value="P:ribosomal small subunit assembly"/>
    <property type="evidence" value="ECO:0007669"/>
    <property type="project" value="TreeGrafter"/>
</dbReference>
<dbReference type="GO" id="GO:0006412">
    <property type="term" value="P:translation"/>
    <property type="evidence" value="ECO:0007669"/>
    <property type="project" value="TreeGrafter"/>
</dbReference>
<dbReference type="CDD" id="cd01734">
    <property type="entry name" value="YlxS_C"/>
    <property type="match status" value="1"/>
</dbReference>
<dbReference type="FunFam" id="2.30.30.180:FF:000001">
    <property type="entry name" value="Ribosome maturation factor RimP"/>
    <property type="match status" value="1"/>
</dbReference>
<dbReference type="FunFam" id="3.30.300.70:FF:000001">
    <property type="entry name" value="Ribosome maturation factor RimP"/>
    <property type="match status" value="1"/>
</dbReference>
<dbReference type="Gene3D" id="2.30.30.180">
    <property type="entry name" value="Ribosome maturation factor RimP, C-terminal domain"/>
    <property type="match status" value="1"/>
</dbReference>
<dbReference type="Gene3D" id="3.30.300.70">
    <property type="entry name" value="RimP-like superfamily, N-terminal"/>
    <property type="match status" value="1"/>
</dbReference>
<dbReference type="HAMAP" id="MF_01077">
    <property type="entry name" value="RimP"/>
    <property type="match status" value="1"/>
</dbReference>
<dbReference type="InterPro" id="IPR003728">
    <property type="entry name" value="Ribosome_maturation_RimP"/>
</dbReference>
<dbReference type="InterPro" id="IPR028998">
    <property type="entry name" value="RimP_C"/>
</dbReference>
<dbReference type="InterPro" id="IPR036847">
    <property type="entry name" value="RimP_C_sf"/>
</dbReference>
<dbReference type="InterPro" id="IPR028989">
    <property type="entry name" value="RimP_N"/>
</dbReference>
<dbReference type="InterPro" id="IPR035956">
    <property type="entry name" value="RimP_N_sf"/>
</dbReference>
<dbReference type="NCBIfam" id="NF000927">
    <property type="entry name" value="PRK00092.1-1"/>
    <property type="match status" value="1"/>
</dbReference>
<dbReference type="PANTHER" id="PTHR33867">
    <property type="entry name" value="RIBOSOME MATURATION FACTOR RIMP"/>
    <property type="match status" value="1"/>
</dbReference>
<dbReference type="PANTHER" id="PTHR33867:SF1">
    <property type="entry name" value="RIBOSOME MATURATION FACTOR RIMP"/>
    <property type="match status" value="1"/>
</dbReference>
<dbReference type="Pfam" id="PF17384">
    <property type="entry name" value="DUF150_C"/>
    <property type="match status" value="1"/>
</dbReference>
<dbReference type="Pfam" id="PF02576">
    <property type="entry name" value="RimP_N"/>
    <property type="match status" value="1"/>
</dbReference>
<dbReference type="SUPFAM" id="SSF74942">
    <property type="entry name" value="YhbC-like, C-terminal domain"/>
    <property type="match status" value="1"/>
</dbReference>
<dbReference type="SUPFAM" id="SSF75420">
    <property type="entry name" value="YhbC-like, N-terminal domain"/>
    <property type="match status" value="1"/>
</dbReference>
<sequence>MSTLEQKLTEMITAPVEALGFELVGIEFIRGRTSTLRIYIDSEDGINVDDCADVSHQVSAVLDVEDPITVAYNLEVSSPGLDRPLFTAEHYARFVGEEVTLVLRMAVQNRRKWQGVIKAVDGEMITVTVEGKDEVFALSNIQKANLVPHF</sequence>
<organism>
    <name type="scientific">Shigella boydii serotype 18 (strain CDC 3083-94 / BS512)</name>
    <dbReference type="NCBI Taxonomy" id="344609"/>
    <lineage>
        <taxon>Bacteria</taxon>
        <taxon>Pseudomonadati</taxon>
        <taxon>Pseudomonadota</taxon>
        <taxon>Gammaproteobacteria</taxon>
        <taxon>Enterobacterales</taxon>
        <taxon>Enterobacteriaceae</taxon>
        <taxon>Shigella</taxon>
    </lineage>
</organism>
<name>RIMP_SHIB3</name>
<accession>B2U205</accession>
<gene>
    <name evidence="1" type="primary">rimP</name>
    <name type="ordered locus">SbBS512_E3601</name>
</gene>
<protein>
    <recommendedName>
        <fullName evidence="1">Ribosome maturation factor RimP</fullName>
    </recommendedName>
</protein>
<comment type="function">
    <text evidence="1">Required for maturation of 30S ribosomal subunits.</text>
</comment>
<comment type="subcellular location">
    <subcellularLocation>
        <location evidence="1">Cytoplasm</location>
    </subcellularLocation>
</comment>
<comment type="similarity">
    <text evidence="1">Belongs to the RimP family.</text>
</comment>